<keyword id="KW-0963">Cytoplasm</keyword>
<keyword id="KW-0687">Ribonucleoprotein</keyword>
<keyword id="KW-0689">Ribosomal protein</keyword>
<sequence length="124" mass="13923">MPPKDSKQKKDTSKAKKDKDPVNKSGGKAKKKKWSKGKVRDKLNNLVLFDKATYDKLYKEVPNYKLITPAVVSERLKIRGSLARAALLELLSKGMIKLVSKHRAQVIYTRNTKGTDEGAPEKEA</sequence>
<comment type="function">
    <text evidence="1">Component of the small ribosomal subunit. The ribosome is a large ribonucleoprotein complex responsible for the synthesis of proteins in the cell.</text>
</comment>
<comment type="subunit">
    <text evidence="1">Component of the small ribosomal subunit.</text>
</comment>
<comment type="subcellular location">
    <subcellularLocation>
        <location evidence="1">Cytoplasm</location>
    </subcellularLocation>
</comment>
<comment type="similarity">
    <text evidence="3">Belongs to the eukaryotic ribosomal protein eS25 family.</text>
</comment>
<dbReference type="EMBL" id="AF402833">
    <property type="protein sequence ID" value="AAK95207.1"/>
    <property type="molecule type" value="mRNA"/>
</dbReference>
<dbReference type="RefSeq" id="NP_001187221.1">
    <property type="nucleotide sequence ID" value="NM_001200292.1"/>
</dbReference>
<dbReference type="RefSeq" id="XP_053542534.1">
    <property type="nucleotide sequence ID" value="XM_053686559.1"/>
</dbReference>
<dbReference type="SMR" id="Q90YP9"/>
<dbReference type="STRING" id="7998.ENSIPUP00000030647"/>
<dbReference type="Ensembl" id="ENSIPUT00015037577">
    <property type="protein sequence ID" value="ENSIPUP00015031746"/>
    <property type="gene ID" value="ENSIPUG00015016106"/>
</dbReference>
<dbReference type="GeneID" id="100305058"/>
<dbReference type="KEGG" id="ipu:100305058"/>
<dbReference type="CTD" id="6230"/>
<dbReference type="OMA" id="RIVHHSG"/>
<dbReference type="OrthoDB" id="10263513at2759"/>
<dbReference type="Proteomes" id="UP000221080">
    <property type="component" value="Chromosome 16"/>
</dbReference>
<dbReference type="GO" id="GO:0005737">
    <property type="term" value="C:cytoplasm"/>
    <property type="evidence" value="ECO:0007669"/>
    <property type="project" value="UniProtKB-SubCell"/>
</dbReference>
<dbReference type="GO" id="GO:1990904">
    <property type="term" value="C:ribonucleoprotein complex"/>
    <property type="evidence" value="ECO:0007669"/>
    <property type="project" value="UniProtKB-KW"/>
</dbReference>
<dbReference type="GO" id="GO:0005840">
    <property type="term" value="C:ribosome"/>
    <property type="evidence" value="ECO:0007669"/>
    <property type="project" value="UniProtKB-KW"/>
</dbReference>
<dbReference type="FunFam" id="1.10.10.10:FF:000166">
    <property type="entry name" value="40S ribosomal protein S25"/>
    <property type="match status" value="1"/>
</dbReference>
<dbReference type="FunFam" id="3.30.63.20:FF:000001">
    <property type="entry name" value="40S ribosomal protein S25"/>
    <property type="match status" value="1"/>
</dbReference>
<dbReference type="Gene3D" id="3.30.63.20">
    <property type="match status" value="1"/>
</dbReference>
<dbReference type="InterPro" id="IPR004977">
    <property type="entry name" value="Ribosomal_eS25"/>
</dbReference>
<dbReference type="PANTHER" id="PTHR12850">
    <property type="entry name" value="40S RIBOSOMAL PROTEIN S25"/>
    <property type="match status" value="1"/>
</dbReference>
<dbReference type="Pfam" id="PF03297">
    <property type="entry name" value="Ribosomal_S25"/>
    <property type="match status" value="1"/>
</dbReference>
<protein>
    <recommendedName>
        <fullName evidence="3">Small ribosomal subunit protein eS25</fullName>
    </recommendedName>
    <alternativeName>
        <fullName>40S ribosomal protein S25</fullName>
    </alternativeName>
</protein>
<proteinExistence type="evidence at transcript level"/>
<reference key="1">
    <citation type="journal article" date="2002" name="Gene">
        <title>Translational machinery of channel catfish: I. A transcriptomic approach to the analysis of 32 40S ribosomal protein genes and their expression.</title>
        <authorList>
            <person name="Karsi A."/>
            <person name="Patterson A."/>
            <person name="Feng J."/>
            <person name="Liu Z.-J."/>
        </authorList>
    </citation>
    <scope>NUCLEOTIDE SEQUENCE [MRNA]</scope>
</reference>
<feature type="chain" id="PRO_0000192874" description="Small ribosomal subunit protein eS25">
    <location>
        <begin position="1"/>
        <end position="124"/>
    </location>
</feature>
<feature type="region of interest" description="Disordered" evidence="2">
    <location>
        <begin position="1"/>
        <end position="37"/>
    </location>
</feature>
<feature type="compositionally biased region" description="Basic and acidic residues" evidence="2">
    <location>
        <begin position="1"/>
        <end position="22"/>
    </location>
</feature>
<feature type="compositionally biased region" description="Basic residues" evidence="2">
    <location>
        <begin position="27"/>
        <end position="37"/>
    </location>
</feature>
<accession>Q90YP9</accession>
<evidence type="ECO:0000250" key="1">
    <source>
        <dbReference type="UniProtKB" id="P62851"/>
    </source>
</evidence>
<evidence type="ECO:0000256" key="2">
    <source>
        <dbReference type="SAM" id="MobiDB-lite"/>
    </source>
</evidence>
<evidence type="ECO:0000305" key="3"/>
<name>RS25_ICTPU</name>
<organism>
    <name type="scientific">Ictalurus punctatus</name>
    <name type="common">Channel catfish</name>
    <name type="synonym">Silurus punctatus</name>
    <dbReference type="NCBI Taxonomy" id="7998"/>
    <lineage>
        <taxon>Eukaryota</taxon>
        <taxon>Metazoa</taxon>
        <taxon>Chordata</taxon>
        <taxon>Craniata</taxon>
        <taxon>Vertebrata</taxon>
        <taxon>Euteleostomi</taxon>
        <taxon>Actinopterygii</taxon>
        <taxon>Neopterygii</taxon>
        <taxon>Teleostei</taxon>
        <taxon>Ostariophysi</taxon>
        <taxon>Siluriformes</taxon>
        <taxon>Ictaluridae</taxon>
        <taxon>Ictalurus</taxon>
    </lineage>
</organism>
<gene>
    <name type="primary">rps25</name>
</gene>